<protein>
    <recommendedName>
        <fullName evidence="12">Dibenzothiophene monooxygenase</fullName>
        <shortName>DBT monooxygenase</shortName>
        <shortName evidence="12">DBT-MO</shortName>
        <ecNumber evidence="5 8">1.14.14.21</ecNumber>
    </recommendedName>
    <alternativeName>
        <fullName>DBT sulfur dioxygenase</fullName>
    </alternativeName>
    <alternativeName>
        <fullName>Dibenzothiophene desulfurization enzyme C</fullName>
    </alternativeName>
    <alternativeName>
        <fullName evidence="11">Sulfide/sulfoxide monooxygenase</fullName>
    </alternativeName>
</protein>
<organism>
    <name type="scientific">Rhodococcus qingshengii</name>
    <dbReference type="NCBI Taxonomy" id="334542"/>
    <lineage>
        <taxon>Bacteria</taxon>
        <taxon>Bacillati</taxon>
        <taxon>Actinomycetota</taxon>
        <taxon>Actinomycetes</taxon>
        <taxon>Mycobacteriales</taxon>
        <taxon>Nocardiaceae</taxon>
        <taxon>Rhodococcus</taxon>
        <taxon>Rhodococcus erythropolis group</taxon>
    </lineage>
</organism>
<keyword id="KW-0963">Cytoplasm</keyword>
<keyword id="KW-0285">Flavoprotein</keyword>
<keyword id="KW-0288">FMN</keyword>
<keyword id="KW-0503">Monooxygenase</keyword>
<keyword id="KW-0547">Nucleotide-binding</keyword>
<keyword id="KW-0560">Oxidoreductase</keyword>
<keyword id="KW-0614">Plasmid</keyword>
<name>DSZC_RHOSG</name>
<reference key="1">
    <citation type="journal article" date="1994" name="J. Bacteriol.">
        <title>Characterization of the desulfurization genes from Rhodococcus sp. strain IGTS8.</title>
        <authorList>
            <person name="Denome S.A."/>
            <person name="Oldfield C."/>
            <person name="Nash L.J."/>
            <person name="Young K.D."/>
        </authorList>
    </citation>
    <scope>NUCLEOTIDE SEQUENCE [GENOMIC DNA]</scope>
    <scope>FUNCTION</scope>
    <scope>FLAVIN COFACTOR</scope>
    <scope>PATHWAY</scope>
    <scope>PROBABLE OPERON STRUCTURE</scope>
    <scope>DISRUPTION PHENOTYPE</scope>
    <scope>BIOTECHNOLOGY</scope>
    <source>
        <strain>ATCC 53968 / IGTS8</strain>
        <plasmid>pSox</plasmid>
    </source>
</reference>
<reference key="2">
    <citation type="journal article" date="1995" name="Appl. Environ. Microbiol.">
        <title>Sequence and molecular characterization of a DNA region encoding the dibenzothiophene desulfurization operon of Rhodococcus sp. strain IGTS8.</title>
        <authorList>
            <person name="Piddington C.S."/>
            <person name="Kovacevich B.R."/>
            <person name="Rambosek J."/>
        </authorList>
    </citation>
    <scope>NUCLEOTIDE SEQUENCE [GENOMIC DNA]</scope>
    <scope>FUNCTION</scope>
    <scope>PATHWAY</scope>
    <scope>INDUCTION</scope>
    <scope>PROBABLE OPERON STRUCTURE</scope>
    <scope>BIOTECHNOLOGY</scope>
    <source>
        <strain>ATCC 53968 / IGTS8</strain>
    </source>
</reference>
<reference key="3">
    <citation type="journal article" date="1996" name="J. Bacteriol.">
        <title>Genetic analysis of the dsz promoter and associated regulatory regions of Rhodococcus erythropolis IGTS8.</title>
        <authorList>
            <person name="Li M.Z."/>
            <person name="Squires C.H."/>
            <person name="Monticello D.J."/>
            <person name="Childs J.D."/>
        </authorList>
    </citation>
    <scope>INDUCTION</scope>
    <source>
        <strain>ATCC 53968 / IGTS8</strain>
    </source>
</reference>
<reference key="4">
    <citation type="journal article" date="1996" name="Nat. Biotechnol.">
        <title>Molecular mechanisms of biocatalytic desulfurization of fossil fuels.</title>
        <authorList>
            <person name="Gray K.A."/>
            <person name="Pogrebinsky O.S."/>
            <person name="Mrachko G.T."/>
            <person name="Xi L."/>
            <person name="Monticello D.J."/>
            <person name="Squires C.H."/>
        </authorList>
    </citation>
    <scope>FUNCTION</scope>
    <scope>CATALYTIC ACTIVITY</scope>
    <scope>FMNH2 AND NAD COFACTORS</scope>
    <scope>PATHWAY</scope>
    <scope>SUBUNIT</scope>
    <source>
        <strain>ATCC 53968 / IGTS8</strain>
    </source>
</reference>
<reference key="5">
    <citation type="journal article" date="1996" name="J. Bacteriol.">
        <title>Gene overexpression, purification, and identification of a desulfurization enzyme from Rhodococcus sp. strain IGTS8 as a sulfide/sulfoxide monooxygenase.</title>
        <authorList>
            <person name="Lei B."/>
            <person name="Tu S.C."/>
        </authorList>
    </citation>
    <scope>FUNCTION</scope>
    <scope>CATALYTIC ACTIVITY</scope>
    <scope>FMNH2 COFACTOR</scope>
    <scope>SUBUNIT</scope>
    <source>
        <strain>ATCC 53968 / IGTS8</strain>
    </source>
</reference>
<reference key="6">
    <citation type="journal article" date="1997" name="Microbiology">
        <title>Elucidation of the metabolic pathway for dibenzothiophene desulphurization by Rhodococcus sp. strain IGTS8 (ATCC 53968).</title>
        <authorList>
            <person name="Oldfield C."/>
            <person name="Pogrebinsky O."/>
            <person name="Simmonds J."/>
            <person name="Olson E.S."/>
            <person name="Kulpa C.F."/>
        </authorList>
    </citation>
    <scope>FUNCTION</scope>
    <scope>NADH COFACTOR</scope>
    <scope>PATHWAY</scope>
    <scope>BIOTECHNOLOGY</scope>
    <source>
        <strain>ATCC 53968 / IGTS8</strain>
    </source>
</reference>
<reference key="7">
    <citation type="journal article" date="2002" name="Appl. Environ. Microbiol.">
        <title>Chemostat approach for the directed evolution of biodesulfurization gain-of-function mutants.</title>
        <authorList>
            <person name="Arensdorf J.J."/>
            <person name="Loomis A.K."/>
            <person name="DiGrazia P.M."/>
            <person name="Monticello D.J."/>
            <person name="Pienkos P.T."/>
        </authorList>
    </citation>
    <scope>FUNCTION</scope>
    <scope>PATHWAY</scope>
    <scope>BIOTECHNOLOGY</scope>
    <scope>MUTAGENESIS OF VAL-261</scope>
    <source>
        <strain>ATCC 53968 / IGTS8</strain>
    </source>
</reference>
<geneLocation type="plasmid">
    <name>pSox</name>
</geneLocation>
<comment type="function">
    <text evidence="2 3 4 5 7 8">Catalyzes the first step of the '4S' desulfurization pathway that removes covalently bound sulfur from dibenzothiophene (DBT) without breaking carbon-carbon bonds. Sulfur dioxygenase which converts DBT to DBT-sulfone (DBTO2 or DBT 5,5-dioxide) in a stepwise manner. In (PubMed:7961424) DBTO (dibenzothiophene-5-oxide) was reported not to be a substrate, in (PubMed:7574582, PubMed:9634856, PubMed:8824615, PubMed:9308179) it is reported to be a substrate (PubMed:7574582, PubMed:7961424, PubMed:8824615, PubMed:9308179, PubMed:9634856). Can also use benzyl sulfide and benzyl sulfoxide as substrates, although benzyl sulfoxide is a poor substrate (PubMed:8824615). The pathway substrate specificity has been augmented using mutagenesis, however no mutations allowed use of alkylated thiophenes (PubMed:11823208).</text>
</comment>
<comment type="catalytic activity">
    <reaction evidence="5 8">
        <text>dibenzothiophene + 2 FMNH2 + 2 O2 = dibenzothiophene 5,5-dioxide + 2 FMN + 2 H2O + 2 H(+)</text>
        <dbReference type="Rhea" id="RHEA:49072"/>
        <dbReference type="ChEBI" id="CHEBI:15377"/>
        <dbReference type="ChEBI" id="CHEBI:15378"/>
        <dbReference type="ChEBI" id="CHEBI:15379"/>
        <dbReference type="ChEBI" id="CHEBI:23681"/>
        <dbReference type="ChEBI" id="CHEBI:57618"/>
        <dbReference type="ChEBI" id="CHEBI:58210"/>
        <dbReference type="ChEBI" id="CHEBI:90356"/>
        <dbReference type="EC" id="1.14.14.21"/>
    </reaction>
</comment>
<comment type="catalytic activity">
    <reaction evidence="5 8">
        <text>dibenzothiophene + FMNH2 + O2 = dibenzothiophene 5-oxide + FMN + H2O + H(+)</text>
        <dbReference type="Rhea" id="RHEA:49076"/>
        <dbReference type="ChEBI" id="CHEBI:15377"/>
        <dbReference type="ChEBI" id="CHEBI:15378"/>
        <dbReference type="ChEBI" id="CHEBI:15379"/>
        <dbReference type="ChEBI" id="CHEBI:23681"/>
        <dbReference type="ChEBI" id="CHEBI:23683"/>
        <dbReference type="ChEBI" id="CHEBI:57618"/>
        <dbReference type="ChEBI" id="CHEBI:58210"/>
    </reaction>
</comment>
<comment type="catalytic activity">
    <reaction evidence="5 8">
        <text>dibenzothiophene 5-oxide + FMNH2 + O2 = dibenzothiophene 5,5-dioxide + FMN + H2O + H(+)</text>
        <dbReference type="Rhea" id="RHEA:49080"/>
        <dbReference type="ChEBI" id="CHEBI:15377"/>
        <dbReference type="ChEBI" id="CHEBI:15378"/>
        <dbReference type="ChEBI" id="CHEBI:15379"/>
        <dbReference type="ChEBI" id="CHEBI:23683"/>
        <dbReference type="ChEBI" id="CHEBI:57618"/>
        <dbReference type="ChEBI" id="CHEBI:58210"/>
        <dbReference type="ChEBI" id="CHEBI:90356"/>
    </reaction>
</comment>
<comment type="cofactor">
    <cofactor evidence="15">
        <name>FAD</name>
        <dbReference type="ChEBI" id="CHEBI:57692"/>
    </cofactor>
    <text evidence="4">Addition of FAD increases DBTO2 production in cell lysates.</text>
</comment>
<comment type="cofactor">
    <cofactor evidence="7">
        <name>NADH</name>
        <dbReference type="ChEBI" id="CHEBI:57945"/>
    </cofactor>
    <text evidence="8">Reduced flavin is provided by flavin reductase DszD; in vitro NADPH and FAD are not substrates.</text>
</comment>
<comment type="pathway">
    <text evidence="2 3 4 8">Sulfur metabolism; dibenzothiophene degradation.</text>
</comment>
<comment type="subunit">
    <text evidence="5 8">Homotetramer (PubMed:9634856). Homodimer (PubMed:8824615).</text>
</comment>
<comment type="subcellular location">
    <subcellularLocation>
        <location evidence="13">Cytoplasm</location>
    </subcellularLocation>
</comment>
<comment type="induction">
    <text evidence="3 6 14 15 16">Expressed during growth on DBT or DMSO as sole sulfur source (at protein level) (PubMed:8932295). Part of the probable dszA-dszB-dszC operon (Probable). Desulfurization is repressed by sulfate, cysteine and methionine (PubMed:7574582, PubMed:8932295).</text>
</comment>
<comment type="domain">
    <text evidence="1">The lid loop assumes one of 2 conformations allowing opening and closing of the active site.</text>
</comment>
<comment type="disruption phenotype">
    <text evidence="4">No detectable desulfurization activity on DBT.</text>
</comment>
<comment type="biotechnology">
    <text evidence="2 3 4 7">Can be used to remove sulfur from polycyclic aromatic sulfur compounds found in gasoline and diesel (biodesulfurization), which are a considerable source of pollution. In addition it may be possible to engineer the operon to make specialty chemicals.</text>
</comment>
<comment type="similarity">
    <text evidence="13">Belongs to the DszC flavin monooxygenase family.</text>
</comment>
<proteinExistence type="evidence at protein level"/>
<sequence length="417" mass="45027">MTLSPEKQHVRPRDAADNDPVAVARGLAEKWRATAVERDRAGGSATAEREDLRASGLLSLLVPREYGGWGADWPTAIEVVREIAAADGSLGHLFGYHLTNAPMIELIGSQEQEEHLYTQIAQNNWWTGNASSENNSHVLDWKVSATPTEDGGYVLNGTKHFCSGAKGSDLLFVFGVVQDDSPQQGAIIAAAIPTSRAGVTPNDDWAAIGMRQTDSGSTDFHNVKVEPDEVLGAPNAFVLAFIQSERGSLFAPIAQLIFANVYLGIAHGALDAAREYTRTQARPWTPAGIQQATEDPYTIRSYGEFTIALQGADAAAREAAHLLQTVWDKGDALTPEDRGELMVKVSGVKALATNAALNISSGVFEVIGARGTHPRYGFDRFWRNVRTHSLHDPVSYKIADVGKHTLNGQYPIPGFTS</sequence>
<gene>
    <name evidence="9" type="primary">dszC</name>
    <name evidence="10" type="synonym">soxC</name>
</gene>
<dbReference type="EC" id="1.14.14.21" evidence="5 8"/>
<dbReference type="EMBL" id="U08850">
    <property type="protein sequence ID" value="AAA56673.1"/>
    <property type="molecule type" value="Genomic_DNA"/>
</dbReference>
<dbReference type="EMBL" id="L37363">
    <property type="protein sequence ID" value="AAA99484.1"/>
    <property type="molecule type" value="Genomic_DNA"/>
</dbReference>
<dbReference type="RefSeq" id="WP_019750078.1">
    <property type="nucleotide sequence ID" value="NZ_JAGWDW010000001.1"/>
</dbReference>
<dbReference type="SMR" id="P54998"/>
<dbReference type="BioCyc" id="MetaCyc:MONOMER-264"/>
<dbReference type="BRENDA" id="1.14.14.21">
    <property type="organism ID" value="27672"/>
</dbReference>
<dbReference type="UniPathway" id="UPA00346"/>
<dbReference type="GO" id="GO:0005737">
    <property type="term" value="C:cytoplasm"/>
    <property type="evidence" value="ECO:0007669"/>
    <property type="project" value="UniProtKB-SubCell"/>
</dbReference>
<dbReference type="GO" id="GO:0008470">
    <property type="term" value="F:3-methylbutanoyl-CoA dehydrogenase activity"/>
    <property type="evidence" value="ECO:0007669"/>
    <property type="project" value="TreeGrafter"/>
</dbReference>
<dbReference type="GO" id="GO:0050660">
    <property type="term" value="F:flavin adenine dinucleotide binding"/>
    <property type="evidence" value="ECO:0007669"/>
    <property type="project" value="InterPro"/>
</dbReference>
<dbReference type="GO" id="GO:0004497">
    <property type="term" value="F:monooxygenase activity"/>
    <property type="evidence" value="ECO:0007669"/>
    <property type="project" value="UniProtKB-KW"/>
</dbReference>
<dbReference type="GO" id="GO:0018896">
    <property type="term" value="P:dibenzothiophene catabolic process"/>
    <property type="evidence" value="ECO:0007669"/>
    <property type="project" value="UniProtKB-UniPathway"/>
</dbReference>
<dbReference type="GO" id="GO:0006552">
    <property type="term" value="P:L-leucine catabolic process"/>
    <property type="evidence" value="ECO:0007669"/>
    <property type="project" value="TreeGrafter"/>
</dbReference>
<dbReference type="CDD" id="cd01163">
    <property type="entry name" value="DszC"/>
    <property type="match status" value="1"/>
</dbReference>
<dbReference type="Gene3D" id="1.10.540.10">
    <property type="entry name" value="Acyl-CoA dehydrogenase/oxidase, N-terminal domain"/>
    <property type="match status" value="1"/>
</dbReference>
<dbReference type="Gene3D" id="2.40.110.10">
    <property type="entry name" value="Butyryl-CoA Dehydrogenase, subunit A, domain 2"/>
    <property type="match status" value="1"/>
</dbReference>
<dbReference type="Gene3D" id="1.20.140.10">
    <property type="entry name" value="Butyryl-CoA Dehydrogenase, subunit A, domain 3"/>
    <property type="match status" value="1"/>
</dbReference>
<dbReference type="InterPro" id="IPR013107">
    <property type="entry name" value="Acyl-CoA_DH_C"/>
</dbReference>
<dbReference type="InterPro" id="IPR006091">
    <property type="entry name" value="Acyl-CoA_Oxase/DH_mid-dom"/>
</dbReference>
<dbReference type="InterPro" id="IPR046373">
    <property type="entry name" value="Acyl-CoA_Oxase/DH_mid-dom_sf"/>
</dbReference>
<dbReference type="InterPro" id="IPR036250">
    <property type="entry name" value="AcylCo_DH-like_C"/>
</dbReference>
<dbReference type="InterPro" id="IPR013786">
    <property type="entry name" value="AcylCoA_DH/ox_N"/>
</dbReference>
<dbReference type="InterPro" id="IPR037069">
    <property type="entry name" value="AcylCoA_DH/ox_N_sf"/>
</dbReference>
<dbReference type="InterPro" id="IPR009100">
    <property type="entry name" value="AcylCoA_DH/oxidase_NM_dom_sf"/>
</dbReference>
<dbReference type="InterPro" id="IPR049992">
    <property type="entry name" value="DszC"/>
</dbReference>
<dbReference type="NCBIfam" id="NF043015">
    <property type="entry name" value="DibenthMonoxDszC"/>
    <property type="match status" value="1"/>
</dbReference>
<dbReference type="PANTHER" id="PTHR43884">
    <property type="entry name" value="ACYL-COA DEHYDROGENASE"/>
    <property type="match status" value="1"/>
</dbReference>
<dbReference type="PANTHER" id="PTHR43884:SF12">
    <property type="entry name" value="ISOVALERYL-COA DEHYDROGENASE, MITOCHONDRIAL-RELATED"/>
    <property type="match status" value="1"/>
</dbReference>
<dbReference type="Pfam" id="PF08028">
    <property type="entry name" value="Acyl-CoA_dh_2"/>
    <property type="match status" value="1"/>
</dbReference>
<dbReference type="Pfam" id="PF02770">
    <property type="entry name" value="Acyl-CoA_dh_M"/>
    <property type="match status" value="1"/>
</dbReference>
<dbReference type="Pfam" id="PF02771">
    <property type="entry name" value="Acyl-CoA_dh_N"/>
    <property type="match status" value="1"/>
</dbReference>
<dbReference type="PIRSF" id="PIRSF016578">
    <property type="entry name" value="HsaA"/>
    <property type="match status" value="1"/>
</dbReference>
<dbReference type="SUPFAM" id="SSF47203">
    <property type="entry name" value="Acyl-CoA dehydrogenase C-terminal domain-like"/>
    <property type="match status" value="1"/>
</dbReference>
<dbReference type="SUPFAM" id="SSF56645">
    <property type="entry name" value="Acyl-CoA dehydrogenase NM domain-like"/>
    <property type="match status" value="1"/>
</dbReference>
<feature type="chain" id="PRO_0000072048" description="Dibenzothiophene monooxygenase">
    <location>
        <begin position="1"/>
        <end position="417"/>
    </location>
</feature>
<feature type="region of interest" description="Lid loop" evidence="1">
    <location>
        <begin position="131"/>
        <end position="142"/>
    </location>
</feature>
<feature type="binding site" evidence="1">
    <location>
        <position position="96"/>
    </location>
    <ligand>
        <name>FMN</name>
        <dbReference type="ChEBI" id="CHEBI:58210"/>
    </ligand>
</feature>
<feature type="binding site" evidence="1">
    <location>
        <begin position="129"/>
        <end position="134"/>
    </location>
    <ligand>
        <name>FMN</name>
        <dbReference type="ChEBI" id="CHEBI:58210"/>
    </ligand>
</feature>
<feature type="binding site" evidence="1">
    <location>
        <begin position="159"/>
        <end position="163"/>
    </location>
    <ligand>
        <name>FMN</name>
        <dbReference type="ChEBI" id="CHEBI:58210"/>
    </ligand>
</feature>
<feature type="binding site" evidence="1">
    <location>
        <position position="282"/>
    </location>
    <ligand>
        <name>FMN</name>
        <dbReference type="ChEBI" id="CHEBI:58210"/>
    </ligand>
</feature>
<feature type="binding site" evidence="1">
    <location>
        <begin position="369"/>
        <end position="370"/>
    </location>
    <ligand>
        <name>FMN</name>
        <dbReference type="ChEBI" id="CHEBI:58210"/>
    </ligand>
</feature>
<feature type="binding site" evidence="1">
    <location>
        <position position="391"/>
    </location>
    <ligand>
        <name>FMN</name>
        <dbReference type="ChEBI" id="CHEBI:58210"/>
    </ligand>
</feature>
<feature type="mutagenesis site" description="Considerable decrease of activity on DBT." evidence="2">
    <original>V</original>
    <variation>A</variation>
    <variation>Y</variation>
    <location>
        <position position="261"/>
    </location>
</feature>
<feature type="mutagenesis site" description="Decreased activity on DBT." evidence="2">
    <original>V</original>
    <variation>C</variation>
    <location>
        <position position="261"/>
    </location>
</feature>
<feature type="mutagenesis site" description="Loss of activity on DBT." evidence="2">
    <original>V</original>
    <variation>D</variation>
    <variation>E</variation>
    <variation>G</variation>
    <variation>H</variation>
    <variation>K</variation>
    <variation>N</variation>
    <variation>P</variation>
    <variation>Q</variation>
    <variation>R</variation>
    <variation>S</variation>
    <variation>W</variation>
    <location>
        <position position="261"/>
    </location>
</feature>
<feature type="mutagenesis site" description="In dszC1; decreased activity on DBT, strain can also use 5-MBT, improved activity against benzothiophene, does not act on octyl sulfide." evidence="7">
    <original>V</original>
    <variation>F</variation>
    <location>
        <position position="261"/>
    </location>
</feature>
<feature type="mutagenesis site" description="Wild-type activity on DBT." evidence="2">
    <original>V</original>
    <variation>I</variation>
    <variation>L</variation>
    <variation>M</variation>
    <variation>T</variation>
    <location>
        <position position="261"/>
    </location>
</feature>
<feature type="sequence conflict" description="In Ref. 2; AAA99484." evidence="13" ref="2">
    <original>G</original>
    <variation>A</variation>
    <location>
        <position position="56"/>
    </location>
</feature>
<feature type="sequence conflict" description="In Ref. 2; AAA99484." evidence="13" ref="2">
    <original>A</original>
    <variation>R</variation>
    <location>
        <position position="251"/>
    </location>
</feature>
<evidence type="ECO:0000250" key="1">
    <source>
        <dbReference type="UniProtKB" id="A0A0C6DRW4"/>
    </source>
</evidence>
<evidence type="ECO:0000269" key="2">
    <source>
    </source>
</evidence>
<evidence type="ECO:0000269" key="3">
    <source>
    </source>
</evidence>
<evidence type="ECO:0000269" key="4">
    <source>
    </source>
</evidence>
<evidence type="ECO:0000269" key="5">
    <source>
    </source>
</evidence>
<evidence type="ECO:0000269" key="6">
    <source>
    </source>
</evidence>
<evidence type="ECO:0000269" key="7">
    <source>
    </source>
</evidence>
<evidence type="ECO:0000269" key="8">
    <source>
    </source>
</evidence>
<evidence type="ECO:0000303" key="9">
    <source>
    </source>
</evidence>
<evidence type="ECO:0000303" key="10">
    <source>
    </source>
</evidence>
<evidence type="ECO:0000303" key="11">
    <source>
    </source>
</evidence>
<evidence type="ECO:0000303" key="12">
    <source>
    </source>
</evidence>
<evidence type="ECO:0000305" key="13"/>
<evidence type="ECO:0000305" key="14">
    <source>
    </source>
</evidence>
<evidence type="ECO:0000305" key="15">
    <source>
    </source>
</evidence>
<evidence type="ECO:0000305" key="16">
    <source>
    </source>
</evidence>
<accession>P54998</accession>